<gene>
    <name type="primary">SCL23</name>
    <name type="ordered locus">At5g41920</name>
    <name type="ORF">MJC20.2</name>
</gene>
<accession>Q9FHZ1</accession>
<evidence type="ECO:0000250" key="1"/>
<evidence type="ECO:0000255" key="2">
    <source>
        <dbReference type="PROSITE-ProRule" id="PRU01191"/>
    </source>
</evidence>
<evidence type="ECO:0000256" key="3">
    <source>
        <dbReference type="SAM" id="MobiDB-lite"/>
    </source>
</evidence>
<evidence type="ECO:0000269" key="4">
    <source>
    </source>
</evidence>
<evidence type="ECO:0000305" key="5"/>
<dbReference type="EMBL" id="AB017067">
    <property type="protein sequence ID" value="BAB08425.1"/>
    <property type="molecule type" value="Genomic_DNA"/>
</dbReference>
<dbReference type="EMBL" id="CP002688">
    <property type="protein sequence ID" value="AED94744.1"/>
    <property type="molecule type" value="Genomic_DNA"/>
</dbReference>
<dbReference type="EMBL" id="BT029760">
    <property type="protein sequence ID" value="ABM06030.1"/>
    <property type="molecule type" value="mRNA"/>
</dbReference>
<dbReference type="RefSeq" id="NP_199007.1">
    <property type="nucleotide sequence ID" value="NM_123557.4"/>
</dbReference>
<dbReference type="SMR" id="Q9FHZ1"/>
<dbReference type="BioGRID" id="19448">
    <property type="interactions" value="21"/>
</dbReference>
<dbReference type="FunCoup" id="Q9FHZ1">
    <property type="interactions" value="265"/>
</dbReference>
<dbReference type="IntAct" id="Q9FHZ1">
    <property type="interactions" value="23"/>
</dbReference>
<dbReference type="STRING" id="3702.Q9FHZ1"/>
<dbReference type="PaxDb" id="3702-AT5G41920.1"/>
<dbReference type="ProteomicsDB" id="232806"/>
<dbReference type="DNASU" id="834197"/>
<dbReference type="EnsemblPlants" id="AT5G41920.1">
    <property type="protein sequence ID" value="AT5G41920.1"/>
    <property type="gene ID" value="AT5G41920"/>
</dbReference>
<dbReference type="GeneID" id="834197"/>
<dbReference type="Gramene" id="AT5G41920.1">
    <property type="protein sequence ID" value="AT5G41920.1"/>
    <property type="gene ID" value="AT5G41920"/>
</dbReference>
<dbReference type="KEGG" id="ath:AT5G41920"/>
<dbReference type="Araport" id="AT5G41920"/>
<dbReference type="TAIR" id="AT5G41920">
    <property type="gene designation" value="SCL23"/>
</dbReference>
<dbReference type="eggNOG" id="ENOG502R062">
    <property type="taxonomic scope" value="Eukaryota"/>
</dbReference>
<dbReference type="HOGENOM" id="CLU_011924_0_2_1"/>
<dbReference type="InParanoid" id="Q9FHZ1"/>
<dbReference type="OMA" id="HPVEGKI"/>
<dbReference type="PhylomeDB" id="Q9FHZ1"/>
<dbReference type="PRO" id="PR:Q9FHZ1"/>
<dbReference type="Proteomes" id="UP000006548">
    <property type="component" value="Chromosome 5"/>
</dbReference>
<dbReference type="ExpressionAtlas" id="Q9FHZ1">
    <property type="expression patterns" value="baseline and differential"/>
</dbReference>
<dbReference type="GO" id="GO:0005634">
    <property type="term" value="C:nucleus"/>
    <property type="evidence" value="ECO:0000314"/>
    <property type="project" value="TAIR"/>
</dbReference>
<dbReference type="GO" id="GO:0003700">
    <property type="term" value="F:DNA-binding transcription factor activity"/>
    <property type="evidence" value="ECO:0000250"/>
    <property type="project" value="TAIR"/>
</dbReference>
<dbReference type="GO" id="GO:0000976">
    <property type="term" value="F:transcription cis-regulatory region binding"/>
    <property type="evidence" value="ECO:0000353"/>
    <property type="project" value="TAIR"/>
</dbReference>
<dbReference type="GO" id="GO:0090610">
    <property type="term" value="P:bundle sheath cell fate specification"/>
    <property type="evidence" value="ECO:0000315"/>
    <property type="project" value="TAIR"/>
</dbReference>
<dbReference type="GO" id="GO:0001714">
    <property type="term" value="P:endodermal cell fate specification"/>
    <property type="evidence" value="ECO:0000316"/>
    <property type="project" value="CACAO"/>
</dbReference>
<dbReference type="GO" id="GO:0048366">
    <property type="term" value="P:leaf development"/>
    <property type="evidence" value="ECO:0000315"/>
    <property type="project" value="TAIR"/>
</dbReference>
<dbReference type="GO" id="GO:0006355">
    <property type="term" value="P:regulation of DNA-templated transcription"/>
    <property type="evidence" value="ECO:0000304"/>
    <property type="project" value="TAIR"/>
</dbReference>
<dbReference type="InterPro" id="IPR005202">
    <property type="entry name" value="TF_GRAS"/>
</dbReference>
<dbReference type="PANTHER" id="PTHR31636">
    <property type="entry name" value="OSJNBA0084A10.13 PROTEIN-RELATED"/>
    <property type="match status" value="1"/>
</dbReference>
<dbReference type="Pfam" id="PF03514">
    <property type="entry name" value="GRAS"/>
    <property type="match status" value="1"/>
</dbReference>
<dbReference type="PROSITE" id="PS50985">
    <property type="entry name" value="GRAS"/>
    <property type="match status" value="1"/>
</dbReference>
<protein>
    <recommendedName>
        <fullName>Scarecrow-like protein 23</fullName>
        <shortName>AtSCL23</shortName>
    </recommendedName>
    <alternativeName>
        <fullName>GRAS family protein 28</fullName>
        <shortName>AtGRAS-28</shortName>
    </alternativeName>
</protein>
<organism>
    <name type="scientific">Arabidopsis thaliana</name>
    <name type="common">Mouse-ear cress</name>
    <dbReference type="NCBI Taxonomy" id="3702"/>
    <lineage>
        <taxon>Eukaryota</taxon>
        <taxon>Viridiplantae</taxon>
        <taxon>Streptophyta</taxon>
        <taxon>Embryophyta</taxon>
        <taxon>Tracheophyta</taxon>
        <taxon>Spermatophyta</taxon>
        <taxon>Magnoliopsida</taxon>
        <taxon>eudicotyledons</taxon>
        <taxon>Gunneridae</taxon>
        <taxon>Pentapetalae</taxon>
        <taxon>rosids</taxon>
        <taxon>malvids</taxon>
        <taxon>Brassicales</taxon>
        <taxon>Brassicaceae</taxon>
        <taxon>Camelineae</taxon>
        <taxon>Arabidopsis</taxon>
    </lineage>
</organism>
<comment type="function">
    <text evidence="1">Probable transcription factor involved in plant development.</text>
</comment>
<comment type="subunit">
    <text evidence="4">Interacts with SHR.</text>
</comment>
<comment type="interaction">
    <interactant intactId="EBI-1238460">
        <id>Q9FHZ1</id>
    </interactant>
    <interactant intactId="EBI-622036">
        <id>P29383</id>
        <label>AGL3</label>
    </interactant>
    <organismsDiffer>false</organismsDiffer>
    <experiments>3</experiments>
</comment>
<comment type="interaction">
    <interactant intactId="EBI-1238460">
        <id>Q9FHZ1</id>
    </interactant>
    <interactant intactId="EBI-4440101">
        <id>Q8GZ13</id>
        <label>BEE1</label>
    </interactant>
    <organismsDiffer>false</organismsDiffer>
    <experiments>5</experiments>
</comment>
<comment type="interaction">
    <interactant intactId="EBI-1238460">
        <id>Q9FHZ1</id>
    </interactant>
    <interactant intactId="EBI-15191755">
        <id>O04541</id>
        <label>F20P5.23</label>
    </interactant>
    <organismsDiffer>false</organismsDiffer>
    <experiments>8</experiments>
</comment>
<comment type="interaction">
    <interactant intactId="EBI-1238460">
        <id>Q9FHZ1</id>
    </interactant>
    <interactant intactId="EBI-25511270">
        <id>Q9FX36</id>
        <label>MYB54</label>
    </interactant>
    <organismsDiffer>false</organismsDiffer>
    <experiments>3</experiments>
</comment>
<comment type="interaction">
    <interactant intactId="EBI-1238460">
        <id>Q9FHZ1</id>
    </interactant>
    <interactant intactId="EBI-4443426">
        <id>O48723</id>
        <label>PLP2</label>
    </interactant>
    <organismsDiffer>false</organismsDiffer>
    <experiments>5</experiments>
</comment>
<comment type="interaction">
    <interactant intactId="EBI-1238460">
        <id>Q9FHZ1</id>
    </interactant>
    <interactant intactId="EBI-963624">
        <id>Q9SLH3</id>
        <label>RGA</label>
    </interactant>
    <organismsDiffer>false</organismsDiffer>
    <experiments>3</experiments>
</comment>
<comment type="interaction">
    <interactant intactId="EBI-1238460">
        <id>Q9FHZ1</id>
    </interactant>
    <interactant intactId="EBI-1388539">
        <id>Q9LMA8</id>
        <label>TIFY10A</label>
    </interactant>
    <organismsDiffer>false</organismsDiffer>
    <experiments>4</experiments>
</comment>
<comment type="interaction">
    <interactant intactId="EBI-1238460">
        <id>Q9FHZ1</id>
    </interactant>
    <interactant intactId="EBI-4426557">
        <id>Q84MB2</id>
        <label>TIFY8</label>
    </interactant>
    <organismsDiffer>false</organismsDiffer>
    <experiments>8</experiments>
</comment>
<comment type="interaction">
    <interactant intactId="EBI-1238460">
        <id>Q9FHZ1</id>
    </interactant>
    <interactant intactId="EBI-15193683">
        <id>Q5CCK4</id>
        <label>VAL2</label>
    </interactant>
    <organismsDiffer>false</organismsDiffer>
    <experiments>5</experiments>
</comment>
<comment type="interaction">
    <interactant intactId="EBI-1238460">
        <id>Q9FHZ1</id>
    </interactant>
    <interactant intactId="EBI-25521815">
        <id>Q9FLB8</id>
    </interactant>
    <organismsDiffer>false</organismsDiffer>
    <experiments>3</experiments>
</comment>
<comment type="subcellular location">
    <subcellularLocation>
        <location evidence="4">Nucleus</location>
    </subcellularLocation>
</comment>
<comment type="tissue specificity">
    <text>Expressed in seedlings, cotyledons, shoot apex, leaves and flowers.</text>
</comment>
<comment type="similarity">
    <text evidence="5">Belongs to the GRAS family.</text>
</comment>
<reference key="1">
    <citation type="journal article" date="1999" name="DNA Res.">
        <title>Structural analysis of Arabidopsis thaliana chromosome 5. IX. Sequence features of the regions of 1,011,550 bp covered by seventeen P1 and TAC clones.</title>
        <authorList>
            <person name="Kaneko T."/>
            <person name="Katoh T."/>
            <person name="Sato S."/>
            <person name="Nakamura Y."/>
            <person name="Asamizu E."/>
            <person name="Kotani H."/>
            <person name="Miyajima N."/>
            <person name="Tabata S."/>
        </authorList>
    </citation>
    <scope>NUCLEOTIDE SEQUENCE [LARGE SCALE GENOMIC DNA]</scope>
    <source>
        <strain>cv. Columbia</strain>
    </source>
</reference>
<reference key="2">
    <citation type="journal article" date="2017" name="Plant J.">
        <title>Araport11: a complete reannotation of the Arabidopsis thaliana reference genome.</title>
        <authorList>
            <person name="Cheng C.Y."/>
            <person name="Krishnakumar V."/>
            <person name="Chan A.P."/>
            <person name="Thibaud-Nissen F."/>
            <person name="Schobel S."/>
            <person name="Town C.D."/>
        </authorList>
    </citation>
    <scope>GENOME REANNOTATION</scope>
    <source>
        <strain>cv. Columbia</strain>
    </source>
</reference>
<reference key="3">
    <citation type="submission" date="2006-12" db="EMBL/GenBank/DDBJ databases">
        <title>Arabidopsis ORF clones.</title>
        <authorList>
            <person name="Bautista V.R."/>
            <person name="Kim C.J."/>
            <person name="Chen H."/>
            <person name="Wu S.Y."/>
            <person name="De Los Reyes C."/>
            <person name="Ecker J.R."/>
        </authorList>
    </citation>
    <scope>NUCLEOTIDE SEQUENCE [LARGE SCALE MRNA]</scope>
    <source>
        <strain>cv. Columbia</strain>
    </source>
</reference>
<reference key="4">
    <citation type="journal article" date="2004" name="Plant Mol. Biol.">
        <title>Genome-wide analysis of the GRAS gene family in rice and Arabidopsis.</title>
        <authorList>
            <person name="Tian C."/>
            <person name="Wan P."/>
            <person name="Sun S."/>
            <person name="Li J."/>
            <person name="Chen M."/>
        </authorList>
    </citation>
    <scope>GENE FAMILY</scope>
</reference>
<reference key="5">
    <citation type="journal article" date="2008" name="Plant Mol. Biol.">
        <title>Large-scale analysis of the GRAS gene family in Arabidopsis thaliana.</title>
        <authorList>
            <person name="Lee M.-H."/>
            <person name="Kim B."/>
            <person name="Song S.-K."/>
            <person name="Heo J.-O."/>
            <person name="Yu N.-I."/>
            <person name="Lee S.A."/>
            <person name="Kim M."/>
            <person name="Kim D.G."/>
            <person name="Sohn S.O."/>
            <person name="Lim C.E."/>
            <person name="Chang K.S."/>
            <person name="Lee M.M."/>
            <person name="Lim J."/>
        </authorList>
    </citation>
    <scope>SUBCELLULAR LOCATION</scope>
    <scope>INTERACTION WITH SHR</scope>
</reference>
<name>SCL23_ARATH</name>
<sequence length="405" mass="44893">MTTKRIDRDLPSSDDPSSAKRRIEFPEETLENDGAAAIKLLSLLLQCAEYVATDHLREASTLLSEISEICSPFGSSPERVVAYFAQALQTRVISSYLSGACSPLSEKPLTVVQSQKIFSALQTYNSVSPLIKFSHFTANQAIFQALDGEDSVHIIDLDVMQGLQWPALFHILASRPRKLRSIRITGFGSSSDLLASTGRRLADFASSLNLPFEFHPIEGIIGNLIDPSQLATRQGEAVVVHWMQHRLYDVTGNNLETLEILRRLKPNLITVVEQELSYDDGGSFLGRFVEALHYYSALFDALGDGLGEESGERFTVEQIVLGTEIRNIVAHGGGRRKRMKWKEELSRVGFRPVSLRGNPATQAGLLLGMLPWNGYTLVEENGTLRLGWKDLSLLTASAWKSQPFD</sequence>
<proteinExistence type="evidence at protein level"/>
<keyword id="KW-0539">Nucleus</keyword>
<keyword id="KW-1185">Reference proteome</keyword>
<keyword id="KW-0804">Transcription</keyword>
<keyword id="KW-0805">Transcription regulation</keyword>
<feature type="chain" id="PRO_0000350862" description="Scarecrow-like protein 23">
    <location>
        <begin position="1"/>
        <end position="405"/>
    </location>
</feature>
<feature type="domain" description="GRAS" evidence="2">
    <location>
        <begin position="31"/>
        <end position="400"/>
    </location>
</feature>
<feature type="region of interest" description="Disordered" evidence="3">
    <location>
        <begin position="1"/>
        <end position="20"/>
    </location>
</feature>
<feature type="region of interest" description="Leucine repeat I (LRI)" evidence="2">
    <location>
        <begin position="38"/>
        <end position="102"/>
    </location>
</feature>
<feature type="region of interest" description="VHIID" evidence="2">
    <location>
        <begin position="121"/>
        <end position="186"/>
    </location>
</feature>
<feature type="region of interest" description="Leucine repeat II (LRII)" evidence="2">
    <location>
        <begin position="196"/>
        <end position="228"/>
    </location>
</feature>
<feature type="region of interest" description="PFYRE" evidence="2">
    <location>
        <begin position="238"/>
        <end position="327"/>
    </location>
</feature>
<feature type="region of interest" description="SAW" evidence="2">
    <location>
        <begin position="330"/>
        <end position="400"/>
    </location>
</feature>
<feature type="short sequence motif" description="LxCxE motif" evidence="2">
    <location>
        <begin position="45"/>
        <end position="49"/>
    </location>
</feature>
<feature type="short sequence motif" description="VHIID" evidence="2">
    <location>
        <begin position="152"/>
        <end position="156"/>
    </location>
</feature>